<proteinExistence type="inferred from homology"/>
<organism>
    <name type="scientific">Rickettsia conorii (strain ATCC VR-613 / Malish 7)</name>
    <dbReference type="NCBI Taxonomy" id="272944"/>
    <lineage>
        <taxon>Bacteria</taxon>
        <taxon>Pseudomonadati</taxon>
        <taxon>Pseudomonadota</taxon>
        <taxon>Alphaproteobacteria</taxon>
        <taxon>Rickettsiales</taxon>
        <taxon>Rickettsiaceae</taxon>
        <taxon>Rickettsieae</taxon>
        <taxon>Rickettsia</taxon>
        <taxon>spotted fever group</taxon>
    </lineage>
</organism>
<evidence type="ECO:0000250" key="1"/>
<evidence type="ECO:0000305" key="2"/>
<protein>
    <recommendedName>
        <fullName>DNA polymerase III subunit alpha</fullName>
        <ecNumber>2.7.7.7</ecNumber>
    </recommendedName>
</protein>
<dbReference type="EC" id="2.7.7.7"/>
<dbReference type="EMBL" id="AE006914">
    <property type="protein sequence ID" value="AAL03749.1"/>
    <property type="molecule type" value="Genomic_DNA"/>
</dbReference>
<dbReference type="PIR" id="C97851">
    <property type="entry name" value="C97851"/>
</dbReference>
<dbReference type="RefSeq" id="WP_010977776.1">
    <property type="nucleotide sequence ID" value="NC_003103.1"/>
</dbReference>
<dbReference type="SMR" id="Q92GB2"/>
<dbReference type="GeneID" id="928363"/>
<dbReference type="KEGG" id="rco:RC1211"/>
<dbReference type="PATRIC" id="fig|272944.4.peg.1388"/>
<dbReference type="HOGENOM" id="CLU_001600_0_0_5"/>
<dbReference type="Proteomes" id="UP000000816">
    <property type="component" value="Chromosome"/>
</dbReference>
<dbReference type="GO" id="GO:0005737">
    <property type="term" value="C:cytoplasm"/>
    <property type="evidence" value="ECO:0007669"/>
    <property type="project" value="UniProtKB-SubCell"/>
</dbReference>
<dbReference type="GO" id="GO:0008408">
    <property type="term" value="F:3'-5' exonuclease activity"/>
    <property type="evidence" value="ECO:0007669"/>
    <property type="project" value="InterPro"/>
</dbReference>
<dbReference type="GO" id="GO:0003887">
    <property type="term" value="F:DNA-directed DNA polymerase activity"/>
    <property type="evidence" value="ECO:0007669"/>
    <property type="project" value="UniProtKB-KW"/>
</dbReference>
<dbReference type="GO" id="GO:0006260">
    <property type="term" value="P:DNA replication"/>
    <property type="evidence" value="ECO:0007669"/>
    <property type="project" value="UniProtKB-KW"/>
</dbReference>
<dbReference type="CDD" id="cd04485">
    <property type="entry name" value="DnaE_OBF"/>
    <property type="match status" value="1"/>
</dbReference>
<dbReference type="CDD" id="cd07433">
    <property type="entry name" value="PHP_PolIIIA_DnaE1"/>
    <property type="match status" value="1"/>
</dbReference>
<dbReference type="Gene3D" id="1.10.150.870">
    <property type="match status" value="1"/>
</dbReference>
<dbReference type="Gene3D" id="1.10.10.1600">
    <property type="entry name" value="Bacterial DNA polymerase III alpha subunit, thumb domain"/>
    <property type="match status" value="1"/>
</dbReference>
<dbReference type="Gene3D" id="3.20.20.140">
    <property type="entry name" value="Metal-dependent hydrolases"/>
    <property type="match status" value="1"/>
</dbReference>
<dbReference type="InterPro" id="IPR011708">
    <property type="entry name" value="DNA_pol3_alpha_NTPase_dom"/>
</dbReference>
<dbReference type="InterPro" id="IPR041931">
    <property type="entry name" value="DNA_pol3_alpha_thumb_dom"/>
</dbReference>
<dbReference type="InterPro" id="IPR040982">
    <property type="entry name" value="DNA_pol3_finger"/>
</dbReference>
<dbReference type="InterPro" id="IPR004805">
    <property type="entry name" value="DnaE2/DnaE/PolC"/>
</dbReference>
<dbReference type="InterPro" id="IPR029460">
    <property type="entry name" value="DNAPol_HHH"/>
</dbReference>
<dbReference type="InterPro" id="IPR004013">
    <property type="entry name" value="PHP_dom"/>
</dbReference>
<dbReference type="InterPro" id="IPR003141">
    <property type="entry name" value="Pol/His_phosphatase_N"/>
</dbReference>
<dbReference type="InterPro" id="IPR016195">
    <property type="entry name" value="Pol/histidinol_Pase-like"/>
</dbReference>
<dbReference type="InterPro" id="IPR049821">
    <property type="entry name" value="PolIIIA_DnaE1_PHP"/>
</dbReference>
<dbReference type="NCBIfam" id="TIGR00594">
    <property type="entry name" value="polc"/>
    <property type="match status" value="1"/>
</dbReference>
<dbReference type="NCBIfam" id="NF004226">
    <property type="entry name" value="PRK05673.1"/>
    <property type="match status" value="1"/>
</dbReference>
<dbReference type="PANTHER" id="PTHR32294">
    <property type="entry name" value="DNA POLYMERASE III SUBUNIT ALPHA"/>
    <property type="match status" value="1"/>
</dbReference>
<dbReference type="PANTHER" id="PTHR32294:SF0">
    <property type="entry name" value="DNA POLYMERASE III SUBUNIT ALPHA"/>
    <property type="match status" value="1"/>
</dbReference>
<dbReference type="Pfam" id="PF07733">
    <property type="entry name" value="DNA_pol3_alpha"/>
    <property type="match status" value="1"/>
</dbReference>
<dbReference type="Pfam" id="PF17657">
    <property type="entry name" value="DNA_pol3_finger"/>
    <property type="match status" value="1"/>
</dbReference>
<dbReference type="Pfam" id="PF14579">
    <property type="entry name" value="HHH_6"/>
    <property type="match status" value="1"/>
</dbReference>
<dbReference type="Pfam" id="PF02811">
    <property type="entry name" value="PHP"/>
    <property type="match status" value="1"/>
</dbReference>
<dbReference type="SMART" id="SM00481">
    <property type="entry name" value="POLIIIAc"/>
    <property type="match status" value="1"/>
</dbReference>
<dbReference type="SUPFAM" id="SSF89550">
    <property type="entry name" value="PHP domain-like"/>
    <property type="match status" value="1"/>
</dbReference>
<keyword id="KW-0963">Cytoplasm</keyword>
<keyword id="KW-0235">DNA replication</keyword>
<keyword id="KW-0239">DNA-directed DNA polymerase</keyword>
<keyword id="KW-0548">Nucleotidyltransferase</keyword>
<keyword id="KW-0808">Transferase</keyword>
<sequence length="1181" mass="132594">MRPEFIHLRTQSSYSFLESALTIEKVVELASSNKMPAICLADKGNLFGSLEFALCAVKKGLQPIHGVILNIKYDIDIFAQILLIAKDETGYKNLLKLSSLTFTKNDRKICDHIDFEDLIEYQEGLIGLCCYTDGIVGKCLLARNEEQAMLFARKLQEILGDRFYFEIMRHELPEEQFIEDSYIRIAAELAIPLVATNKVLFSEKSMHDAHDVLLCISAGVTKEYLDRKTVSENCYFKSPHEMIELFSDLPSAIQNTVNLRERCYFAAHANPPMLPNFATENISETDLIKKDAKEGLLARLATKFKSENIALENQEALKTEYFARLNYELDIICNMNFAGYFLIVSDFIKWSKKEGILVGPGRGSGAGSVVAWSLLITDLDPIKFGLLFERFLNPERISMPDFDIDFCQERREEVINYVRSKYGNNRVGQIITFGKMQAKAVIKDVARVLSLPYKFADYLTELVPFSAVNPVSLEQAMREVPELANAAKGNGLYNLDGEAELIKLVIDTSLILEGLHRHSSTHAAGIVIAGTDLVDIVPVYKDANSDMLIVGYSMKYSEIAGLIKFDFLGLQTLTVITDCKKLLKEQGIEVDFNNMTFDDNKTYQMLCKGKGVGVFQFESIGMKDALRRLKPDSIHDLIALGALYRPGPMENIPTYIACKHKLQQPDYLHELLQPILEETYGVVIYQEQVQRIAQVLAGYTLGAADLLRRAMGKKIKKEMEEQEEIFVKGAIANNISESQAKSIFATVAKFAGYGFNKAHAASYGVISYQTAYLKANYPAAFLVACLNLELNNHDKINLFLQEAKDNGIKIIAPNINISEGYFSVKFSDTVIPHSVKPVIPRLDRGIQKISKDTVVKPRCDIAGAIIFALGAIKGVTPNFGKLVTDERKARGAFKSITDFIERLPPKSINSKLLENLIKSGCFDELHDNRLQLLSSIPKLLSYSTAYHEEQESNQFSLIKVSSLSPTILVSSDYADKNTLAFYEFEAMGLFISNHPLTEYQEIFSRLNILNTADLHNNLPDGTNRVNLAGVIQKKDSRMSARGRFVTLVLSDPENIFELSIFSEEVLKDYVHLLDVKSLVVVNCDIVKDEGGIKLTAKSFSSIEDAINNKQFELQFYPQNHEELRQIVTLLAARINNEDQSNAKATIYLQSADVKNFVAKITLPEKFLLQGQDFEILKGYSK</sequence>
<comment type="function">
    <text evidence="1">DNA polymerase III is a complex, multichain enzyme responsible for most of the replicative synthesis in bacteria. This DNA polymerase also exhibits 3' to 5' exonuclease activity. The alpha chain is the DNA polymerase (By similarity).</text>
</comment>
<comment type="catalytic activity">
    <reaction>
        <text>DNA(n) + a 2'-deoxyribonucleoside 5'-triphosphate = DNA(n+1) + diphosphate</text>
        <dbReference type="Rhea" id="RHEA:22508"/>
        <dbReference type="Rhea" id="RHEA-COMP:17339"/>
        <dbReference type="Rhea" id="RHEA-COMP:17340"/>
        <dbReference type="ChEBI" id="CHEBI:33019"/>
        <dbReference type="ChEBI" id="CHEBI:61560"/>
        <dbReference type="ChEBI" id="CHEBI:173112"/>
        <dbReference type="EC" id="2.7.7.7"/>
    </reaction>
</comment>
<comment type="subunit">
    <text evidence="1">DNA polymerase III contains a core (composed of alpha, epsilon and theta chains) that associates with a tau subunit. This core dimerizes to form the PolIII' complex. PolIII' associates with the gamma complex (composed of gamma, delta, delta', psi and chi chains) and with the beta chain to form the complete DNA polymerase III complex (By similarity).</text>
</comment>
<comment type="subcellular location">
    <subcellularLocation>
        <location evidence="1">Cytoplasm</location>
    </subcellularLocation>
</comment>
<comment type="similarity">
    <text evidence="2">Belongs to the DNA polymerase type-C family. DnaE subfamily.</text>
</comment>
<feature type="chain" id="PRO_0000280956" description="DNA polymerase III subunit alpha">
    <location>
        <begin position="1"/>
        <end position="1181"/>
    </location>
</feature>
<reference key="1">
    <citation type="journal article" date="2001" name="Science">
        <title>Mechanisms of evolution in Rickettsia conorii and R. prowazekii.</title>
        <authorList>
            <person name="Ogata H."/>
            <person name="Audic S."/>
            <person name="Renesto-Audiffren P."/>
            <person name="Fournier P.-E."/>
            <person name="Barbe V."/>
            <person name="Samson D."/>
            <person name="Roux V."/>
            <person name="Cossart P."/>
            <person name="Weissenbach J."/>
            <person name="Claverie J.-M."/>
            <person name="Raoult D."/>
        </authorList>
    </citation>
    <scope>NUCLEOTIDE SEQUENCE [LARGE SCALE GENOMIC DNA]</scope>
    <source>
        <strain>ATCC VR-613 / Malish 7</strain>
    </source>
</reference>
<name>DPO3A_RICCN</name>
<accession>Q92GB2</accession>
<gene>
    <name type="primary">dnaE</name>
    <name type="ordered locus">RC1211</name>
</gene>